<name>SYGB_LIMRD</name>
<gene>
    <name evidence="1" type="primary">glyS</name>
    <name type="ordered locus">Lreu_0741</name>
</gene>
<evidence type="ECO:0000255" key="1">
    <source>
        <dbReference type="HAMAP-Rule" id="MF_00255"/>
    </source>
</evidence>
<protein>
    <recommendedName>
        <fullName evidence="1">Glycine--tRNA ligase beta subunit</fullName>
        <ecNumber evidence="1">6.1.1.14</ecNumber>
    </recommendedName>
    <alternativeName>
        <fullName evidence="1">Glycyl-tRNA synthetase beta subunit</fullName>
        <shortName evidence="1">GlyRS</shortName>
    </alternativeName>
</protein>
<sequence length="691" mass="78537">MANTYLLEVGVEEMPAHVVTPSIKQLHERVAKYLKEQRITFDDIQEFATPRRMALLIHGLSDKQPDIDESVKGPAKKIAQDADGNWTKAAIGFTRGQGASVEDIEFKEVKGVEYVFVEKHIAGKTVAEVLQGLPAVITSMTFPTLMKWGYNNLQFIRPIRWLVSLLNDEVVPFNILDVEAGRETQGHRFLGHPVEIAKADDYEETLNNDFVIADQTKRKNLIKDQITKIINENNWQVDWDEDLLEEVNNLVEWPTAFAGSFDEKYLALPDPVLITSMKDNQRFFCVRDGDGNLLSHFISVRNGNTDYLDNVIKGNERVLVPRLEDAQFFYQEDQKLTIDEYVERLKKVSFHDKISSMYDKMQRVAVIANVLGKQLNLSDEELADLDRAAHIYKFDLTTQMVGEFAELQGIMGEIYAKLFGEKDDVATAIREHYMPISAEGELPQTKIGAVLAIADKLDSIMSFFAVDMIPSGSNDPYALRRQAFGIVRIIADRGWHLPLLSIQSEIAPAFENAEINVSFDLNKNSDEVRSFFLDRIKQLFHGQKVRHDIIDAATDTRQNDIANILEAIQTIDDHKDDDNFKEDIEALTRVLRIAKKDKRPVSELVVDPNLFENPSEAKMHTAVSELIKENQQTVSENFAALRTLTPIISEYFDENMIMDKNEDIRNNRLAQLSILAHQASLIGNLDNLIVK</sequence>
<keyword id="KW-0030">Aminoacyl-tRNA synthetase</keyword>
<keyword id="KW-0067">ATP-binding</keyword>
<keyword id="KW-0963">Cytoplasm</keyword>
<keyword id="KW-0436">Ligase</keyword>
<keyword id="KW-0547">Nucleotide-binding</keyword>
<keyword id="KW-0648">Protein biosynthesis</keyword>
<keyword id="KW-1185">Reference proteome</keyword>
<accession>A5VJI1</accession>
<organism>
    <name type="scientific">Limosilactobacillus reuteri (strain DSM 20016)</name>
    <name type="common">Lactobacillus reuteri</name>
    <dbReference type="NCBI Taxonomy" id="557436"/>
    <lineage>
        <taxon>Bacteria</taxon>
        <taxon>Bacillati</taxon>
        <taxon>Bacillota</taxon>
        <taxon>Bacilli</taxon>
        <taxon>Lactobacillales</taxon>
        <taxon>Lactobacillaceae</taxon>
        <taxon>Limosilactobacillus</taxon>
    </lineage>
</organism>
<comment type="catalytic activity">
    <reaction evidence="1">
        <text>tRNA(Gly) + glycine + ATP = glycyl-tRNA(Gly) + AMP + diphosphate</text>
        <dbReference type="Rhea" id="RHEA:16013"/>
        <dbReference type="Rhea" id="RHEA-COMP:9664"/>
        <dbReference type="Rhea" id="RHEA-COMP:9683"/>
        <dbReference type="ChEBI" id="CHEBI:30616"/>
        <dbReference type="ChEBI" id="CHEBI:33019"/>
        <dbReference type="ChEBI" id="CHEBI:57305"/>
        <dbReference type="ChEBI" id="CHEBI:78442"/>
        <dbReference type="ChEBI" id="CHEBI:78522"/>
        <dbReference type="ChEBI" id="CHEBI:456215"/>
        <dbReference type="EC" id="6.1.1.14"/>
    </reaction>
</comment>
<comment type="subunit">
    <text evidence="1">Tetramer of two alpha and two beta subunits.</text>
</comment>
<comment type="subcellular location">
    <subcellularLocation>
        <location evidence="1">Cytoplasm</location>
    </subcellularLocation>
</comment>
<comment type="similarity">
    <text evidence="1">Belongs to the class-II aminoacyl-tRNA synthetase family.</text>
</comment>
<feature type="chain" id="PRO_1000059062" description="Glycine--tRNA ligase beta subunit">
    <location>
        <begin position="1"/>
        <end position="691"/>
    </location>
</feature>
<proteinExistence type="inferred from homology"/>
<dbReference type="EC" id="6.1.1.14" evidence="1"/>
<dbReference type="EMBL" id="CP000705">
    <property type="protein sequence ID" value="ABQ83005.1"/>
    <property type="molecule type" value="Genomic_DNA"/>
</dbReference>
<dbReference type="RefSeq" id="WP_003668126.1">
    <property type="nucleotide sequence ID" value="NC_009513.1"/>
</dbReference>
<dbReference type="SMR" id="A5VJI1"/>
<dbReference type="STRING" id="557436.Lreu_0741"/>
<dbReference type="KEGG" id="lre:Lreu_0741"/>
<dbReference type="PATRIC" id="fig|557436.17.peg.1028"/>
<dbReference type="eggNOG" id="COG0751">
    <property type="taxonomic scope" value="Bacteria"/>
</dbReference>
<dbReference type="HOGENOM" id="CLU_007220_2_2_9"/>
<dbReference type="Proteomes" id="UP000001991">
    <property type="component" value="Chromosome"/>
</dbReference>
<dbReference type="GO" id="GO:0005829">
    <property type="term" value="C:cytosol"/>
    <property type="evidence" value="ECO:0007669"/>
    <property type="project" value="TreeGrafter"/>
</dbReference>
<dbReference type="GO" id="GO:0004814">
    <property type="term" value="F:arginine-tRNA ligase activity"/>
    <property type="evidence" value="ECO:0007669"/>
    <property type="project" value="InterPro"/>
</dbReference>
<dbReference type="GO" id="GO:0005524">
    <property type="term" value="F:ATP binding"/>
    <property type="evidence" value="ECO:0007669"/>
    <property type="project" value="UniProtKB-UniRule"/>
</dbReference>
<dbReference type="GO" id="GO:0004820">
    <property type="term" value="F:glycine-tRNA ligase activity"/>
    <property type="evidence" value="ECO:0007669"/>
    <property type="project" value="UniProtKB-UniRule"/>
</dbReference>
<dbReference type="GO" id="GO:0006420">
    <property type="term" value="P:arginyl-tRNA aminoacylation"/>
    <property type="evidence" value="ECO:0007669"/>
    <property type="project" value="InterPro"/>
</dbReference>
<dbReference type="GO" id="GO:0006426">
    <property type="term" value="P:glycyl-tRNA aminoacylation"/>
    <property type="evidence" value="ECO:0007669"/>
    <property type="project" value="UniProtKB-UniRule"/>
</dbReference>
<dbReference type="HAMAP" id="MF_00255">
    <property type="entry name" value="Gly_tRNA_synth_beta"/>
    <property type="match status" value="1"/>
</dbReference>
<dbReference type="InterPro" id="IPR008909">
    <property type="entry name" value="DALR_anticod-bd"/>
</dbReference>
<dbReference type="InterPro" id="IPR015944">
    <property type="entry name" value="Gly-tRNA-synth_bsu"/>
</dbReference>
<dbReference type="InterPro" id="IPR006194">
    <property type="entry name" value="Gly-tRNA-synth_heterodimer"/>
</dbReference>
<dbReference type="NCBIfam" id="TIGR00211">
    <property type="entry name" value="glyS"/>
    <property type="match status" value="1"/>
</dbReference>
<dbReference type="PANTHER" id="PTHR30075:SF2">
    <property type="entry name" value="GLYCINE--TRNA LIGASE, CHLOROPLASTIC_MITOCHONDRIAL 2"/>
    <property type="match status" value="1"/>
</dbReference>
<dbReference type="PANTHER" id="PTHR30075">
    <property type="entry name" value="GLYCYL-TRNA SYNTHETASE"/>
    <property type="match status" value="1"/>
</dbReference>
<dbReference type="Pfam" id="PF05746">
    <property type="entry name" value="DALR_1"/>
    <property type="match status" value="1"/>
</dbReference>
<dbReference type="Pfam" id="PF02092">
    <property type="entry name" value="tRNA_synt_2f"/>
    <property type="match status" value="1"/>
</dbReference>
<dbReference type="PRINTS" id="PR01045">
    <property type="entry name" value="TRNASYNTHGB"/>
</dbReference>
<dbReference type="SUPFAM" id="SSF109604">
    <property type="entry name" value="HD-domain/PDEase-like"/>
    <property type="match status" value="1"/>
</dbReference>
<dbReference type="PROSITE" id="PS50861">
    <property type="entry name" value="AA_TRNA_LIGASE_II_GLYAB"/>
    <property type="match status" value="1"/>
</dbReference>
<reference key="1">
    <citation type="journal article" date="2011" name="PLoS Genet.">
        <title>The evolution of host specialization in the vertebrate gut symbiont Lactobacillus reuteri.</title>
        <authorList>
            <person name="Frese S.A."/>
            <person name="Benson A.K."/>
            <person name="Tannock G.W."/>
            <person name="Loach D.M."/>
            <person name="Kim J."/>
            <person name="Zhang M."/>
            <person name="Oh P.L."/>
            <person name="Heng N.C."/>
            <person name="Patil P.B."/>
            <person name="Juge N."/>
            <person name="Mackenzie D.A."/>
            <person name="Pearson B.M."/>
            <person name="Lapidus A."/>
            <person name="Dalin E."/>
            <person name="Tice H."/>
            <person name="Goltsman E."/>
            <person name="Land M."/>
            <person name="Hauser L."/>
            <person name="Ivanova N."/>
            <person name="Kyrpides N.C."/>
            <person name="Walter J."/>
        </authorList>
    </citation>
    <scope>NUCLEOTIDE SEQUENCE [LARGE SCALE GENOMIC DNA]</scope>
    <source>
        <strain>DSM 20016</strain>
    </source>
</reference>